<dbReference type="EC" id="3.4.11.9"/>
<dbReference type="EMBL" id="L23174">
    <property type="protein sequence ID" value="AAB00325.1"/>
    <property type="molecule type" value="Genomic_DNA"/>
</dbReference>
<dbReference type="SMR" id="P0A3Z4"/>
<dbReference type="MEROPS" id="M24.033"/>
<dbReference type="GO" id="GO:0005829">
    <property type="term" value="C:cytosol"/>
    <property type="evidence" value="ECO:0007669"/>
    <property type="project" value="TreeGrafter"/>
</dbReference>
<dbReference type="GO" id="GO:0030145">
    <property type="term" value="F:manganese ion binding"/>
    <property type="evidence" value="ECO:0007669"/>
    <property type="project" value="InterPro"/>
</dbReference>
<dbReference type="GO" id="GO:0070006">
    <property type="term" value="F:metalloaminopeptidase activity"/>
    <property type="evidence" value="ECO:0007669"/>
    <property type="project" value="InterPro"/>
</dbReference>
<dbReference type="GO" id="GO:0006508">
    <property type="term" value="P:proteolysis"/>
    <property type="evidence" value="ECO:0007669"/>
    <property type="project" value="UniProtKB-KW"/>
</dbReference>
<dbReference type="CDD" id="cd01087">
    <property type="entry name" value="Prolidase"/>
    <property type="match status" value="1"/>
</dbReference>
<dbReference type="Gene3D" id="3.90.230.10">
    <property type="entry name" value="Creatinase/methionine aminopeptidase superfamily"/>
    <property type="match status" value="1"/>
</dbReference>
<dbReference type="Gene3D" id="3.40.350.10">
    <property type="entry name" value="Creatinase/prolidase N-terminal domain"/>
    <property type="match status" value="1"/>
</dbReference>
<dbReference type="InterPro" id="IPR007865">
    <property type="entry name" value="Aminopep_P_N"/>
</dbReference>
<dbReference type="InterPro" id="IPR029149">
    <property type="entry name" value="Creatin/AminoP/Spt16_N"/>
</dbReference>
<dbReference type="InterPro" id="IPR036005">
    <property type="entry name" value="Creatinase/aminopeptidase-like"/>
</dbReference>
<dbReference type="InterPro" id="IPR000994">
    <property type="entry name" value="Pept_M24"/>
</dbReference>
<dbReference type="InterPro" id="IPR001131">
    <property type="entry name" value="Peptidase_M24B_aminopep-P_CS"/>
</dbReference>
<dbReference type="InterPro" id="IPR052433">
    <property type="entry name" value="X-Pro_dipept-like"/>
</dbReference>
<dbReference type="PANTHER" id="PTHR43226">
    <property type="entry name" value="XAA-PRO AMINOPEPTIDASE 3"/>
    <property type="match status" value="1"/>
</dbReference>
<dbReference type="PANTHER" id="PTHR43226:SF4">
    <property type="entry name" value="XAA-PRO AMINOPEPTIDASE 3"/>
    <property type="match status" value="1"/>
</dbReference>
<dbReference type="Pfam" id="PF05195">
    <property type="entry name" value="AMP_N"/>
    <property type="match status" value="1"/>
</dbReference>
<dbReference type="Pfam" id="PF00557">
    <property type="entry name" value="Peptidase_M24"/>
    <property type="match status" value="1"/>
</dbReference>
<dbReference type="SMART" id="SM01011">
    <property type="entry name" value="AMP_N"/>
    <property type="match status" value="1"/>
</dbReference>
<dbReference type="SUPFAM" id="SSF55920">
    <property type="entry name" value="Creatinase/aminopeptidase"/>
    <property type="match status" value="1"/>
</dbReference>
<dbReference type="SUPFAM" id="SSF53092">
    <property type="entry name" value="Creatinase/prolidase N-terminal domain"/>
    <property type="match status" value="1"/>
</dbReference>
<dbReference type="PROSITE" id="PS00491">
    <property type="entry name" value="PROLINE_PEPTIDASE"/>
    <property type="match status" value="1"/>
</dbReference>
<accession>P0A3Z4</accession>
<accession>Q60394</accession>
<evidence type="ECO:0000250" key="1"/>
<evidence type="ECO:0000305" key="2"/>
<proteinExistence type="inferred from homology"/>
<feature type="chain" id="PRO_0000185082" description="Xaa-Pro aminopeptidase 2">
    <location>
        <begin position="1"/>
        <end position="470"/>
    </location>
</feature>
<feature type="binding site" evidence="1">
    <location>
        <position position="287"/>
    </location>
    <ligand>
        <name>Mn(2+)</name>
        <dbReference type="ChEBI" id="CHEBI:29035"/>
        <label>2</label>
    </ligand>
</feature>
<feature type="binding site" evidence="1">
    <location>
        <position position="299"/>
    </location>
    <ligand>
        <name>Mn(2+)</name>
        <dbReference type="ChEBI" id="CHEBI:29035"/>
        <label>1</label>
    </ligand>
</feature>
<feature type="binding site" evidence="1">
    <location>
        <position position="299"/>
    </location>
    <ligand>
        <name>Mn(2+)</name>
        <dbReference type="ChEBI" id="CHEBI:29035"/>
        <label>2</label>
    </ligand>
</feature>
<feature type="binding site" evidence="1">
    <location>
        <position position="382"/>
    </location>
    <ligand>
        <name>Mn(2+)</name>
        <dbReference type="ChEBI" id="CHEBI:29035"/>
        <label>1</label>
    </ligand>
</feature>
<feature type="binding site" evidence="1">
    <location>
        <position position="413"/>
    </location>
    <ligand>
        <name>Mn(2+)</name>
        <dbReference type="ChEBI" id="CHEBI:29035"/>
        <label>1</label>
    </ligand>
</feature>
<feature type="binding site" evidence="1">
    <location>
        <position position="437"/>
    </location>
    <ligand>
        <name>Mn(2+)</name>
        <dbReference type="ChEBI" id="CHEBI:29035"/>
        <label>1</label>
    </ligand>
</feature>
<feature type="binding site" evidence="1">
    <location>
        <position position="437"/>
    </location>
    <ligand>
        <name>Mn(2+)</name>
        <dbReference type="ChEBI" id="CHEBI:29035"/>
        <label>2</label>
    </ligand>
</feature>
<sequence>MSNRRKNSLYPTLSAELSALMRTGWADTERHDLAPAEQAPYAALRRAALSARFPGERLVVPSGNLKVRSNDDTYPFRSYSGYVHMTGDQARDGALVLEPRPDGGHDAYCYQLPRDSRDDDEFWTGAHAELWTGRRRSLAESERVLGLPCRDVRTAAADLAAVSEVRTRIVRGIDPALEAAVTTDEERDAELEDALSDLRLVKDAWELGELRKAVDSTVRGFTDVVGELSRAVASSERWLEGTFFRRARLEGNAVGYGTICAAGEHATIMHWTDNDGPVRPGDLLLLDAGVETRSLYTADVTRTLPISGTFTPLQREVYDAVYEAQEAGIATVKPGAAYRDFHEAAQRHLAARLVEWGFIEGPAERAYELGLQRRFTMAGTGHMLGLDVHDCARARTEEYVEGVLEPGMCLTVEPGLYFQADDLTVPEEWRGIGVRIEDDLVVTEDGHENLSAGLPRSADEVEAWMARFAG</sequence>
<reference key="1">
    <citation type="journal article" date="1994" name="J. Ind. Microbiol.">
        <title>Intracellular aminopeptidases in Streptomyces lividans 66.</title>
        <authorList>
            <person name="Butler M.J."/>
            <person name="Aphale J.S."/>
            <person name="Dizonno M.A."/>
            <person name="Krygsman P."/>
            <person name="Walczyk E."/>
            <person name="Malek L.T."/>
        </authorList>
    </citation>
    <scope>NUCLEOTIDE SEQUENCE [GENOMIC DNA]</scope>
    <source>
        <strain>66 / 1326</strain>
    </source>
</reference>
<organism>
    <name type="scientific">Streptomyces lividans</name>
    <dbReference type="NCBI Taxonomy" id="1916"/>
    <lineage>
        <taxon>Bacteria</taxon>
        <taxon>Bacillati</taxon>
        <taxon>Actinomycetota</taxon>
        <taxon>Actinomycetes</taxon>
        <taxon>Kitasatosporales</taxon>
        <taxon>Streptomycetaceae</taxon>
        <taxon>Streptomyces</taxon>
    </lineage>
</organism>
<protein>
    <recommendedName>
        <fullName>Xaa-Pro aminopeptidase 2</fullName>
        <ecNumber>3.4.11.9</ecNumber>
    </recommendedName>
    <alternativeName>
        <fullName>Aminoacylproline aminopeptidase II</fullName>
    </alternativeName>
    <alternativeName>
        <fullName>Aminopeptidase P II</fullName>
        <shortName>APP</shortName>
        <shortName>PEPP II</shortName>
    </alternativeName>
    <alternativeName>
        <fullName>X-Pro aminopeptidase II</fullName>
    </alternativeName>
    <alternativeName>
        <fullName>Xaa-Pro aminopeptidase II</fullName>
    </alternativeName>
</protein>
<name>AMPP2_STRLI</name>
<gene>
    <name type="primary">pepP2</name>
</gene>
<keyword id="KW-0031">Aminopeptidase</keyword>
<keyword id="KW-0378">Hydrolase</keyword>
<keyword id="KW-0464">Manganese</keyword>
<keyword id="KW-0479">Metal-binding</keyword>
<keyword id="KW-0482">Metalloprotease</keyword>
<keyword id="KW-0645">Protease</keyword>
<comment type="catalytic activity">
    <reaction>
        <text>Release of any N-terminal amino acid, including proline, that is linked to proline, even from a dipeptide or tripeptide.</text>
        <dbReference type="EC" id="3.4.11.9"/>
    </reaction>
</comment>
<comment type="cofactor">
    <cofactor evidence="1">
        <name>Mn(2+)</name>
        <dbReference type="ChEBI" id="CHEBI:29035"/>
    </cofactor>
    <text evidence="1">Binds 2 manganese ions per subunit.</text>
</comment>
<comment type="subunit">
    <text evidence="1">Homodimer.</text>
</comment>
<comment type="miscellaneous">
    <text>S.lividans has two genes (pepP1 and pepP2) which encode aminopeptidase P.</text>
</comment>
<comment type="similarity">
    <text evidence="2">Belongs to the peptidase M24B family.</text>
</comment>